<sequence>MMASAPQDRPAGTPPQGRGLLIVVTGASGVGKGTLRERWLAGQDVFYSTSWTTREPRPGEVNGRDYVFVSPAEFLAKAQQNGFLEHAQFVGNHYGTPIEPIEAALERGQDVVLEIEVEGAMQVKDRMGEQAILVFIMPPSLTELRRRLTGRATETPERIEKRLTRARDEIQAAHDFRYVIVNDNLDRAVSELLAVQQAERAAQKAAEHWTPEEQQARALADTVRSTALSREALQQVVES</sequence>
<organism>
    <name type="scientific">Deinococcus radiodurans (strain ATCC 13939 / DSM 20539 / JCM 16871 / CCUG 27074 / LMG 4051 / NBRC 15346 / NCIMB 9279 / VKM B-1422 / R1)</name>
    <dbReference type="NCBI Taxonomy" id="243230"/>
    <lineage>
        <taxon>Bacteria</taxon>
        <taxon>Thermotogati</taxon>
        <taxon>Deinococcota</taxon>
        <taxon>Deinococci</taxon>
        <taxon>Deinococcales</taxon>
        <taxon>Deinococcaceae</taxon>
        <taxon>Deinococcus</taxon>
    </lineage>
</organism>
<reference key="1">
    <citation type="journal article" date="1999" name="Science">
        <title>Genome sequence of the radioresistant bacterium Deinococcus radiodurans R1.</title>
        <authorList>
            <person name="White O."/>
            <person name="Eisen J.A."/>
            <person name="Heidelberg J.F."/>
            <person name="Hickey E.K."/>
            <person name="Peterson J.D."/>
            <person name="Dodson R.J."/>
            <person name="Haft D.H."/>
            <person name="Gwinn M.L."/>
            <person name="Nelson W.C."/>
            <person name="Richardson D.L."/>
            <person name="Moffat K.S."/>
            <person name="Qin H."/>
            <person name="Jiang L."/>
            <person name="Pamphile W."/>
            <person name="Crosby M."/>
            <person name="Shen M."/>
            <person name="Vamathevan J.J."/>
            <person name="Lam P."/>
            <person name="McDonald L.A."/>
            <person name="Utterback T.R."/>
            <person name="Zalewski C."/>
            <person name="Makarova K.S."/>
            <person name="Aravind L."/>
            <person name="Daly M.J."/>
            <person name="Minton K.W."/>
            <person name="Fleischmann R.D."/>
            <person name="Ketchum K.A."/>
            <person name="Nelson K.E."/>
            <person name="Salzberg S.L."/>
            <person name="Smith H.O."/>
            <person name="Venter J.C."/>
            <person name="Fraser C.M."/>
        </authorList>
    </citation>
    <scope>NUCLEOTIDE SEQUENCE [LARGE SCALE GENOMIC DNA]</scope>
    <source>
        <strain>ATCC 13939 / DSM 20539 / JCM 16871 / CCUG 27074 / LMG 4051 / NBRC 15346 / NCIMB 9279 / VKM B-1422 / R1</strain>
    </source>
</reference>
<accession>Q9RS38</accession>
<gene>
    <name type="primary">gmk</name>
    <name type="ordered locus">DR_2289</name>
</gene>
<protein>
    <recommendedName>
        <fullName>Guanylate kinase</fullName>
        <ecNumber>2.7.4.8</ecNumber>
    </recommendedName>
    <alternativeName>
        <fullName>GMP kinase</fullName>
    </alternativeName>
</protein>
<feature type="chain" id="PRO_0000170531" description="Guanylate kinase">
    <location>
        <begin position="1"/>
        <end position="239"/>
    </location>
</feature>
<feature type="domain" description="Guanylate kinase-like">
    <location>
        <begin position="19"/>
        <end position="197"/>
    </location>
</feature>
<feature type="binding site" evidence="1">
    <location>
        <begin position="26"/>
        <end position="33"/>
    </location>
    <ligand>
        <name>ATP</name>
        <dbReference type="ChEBI" id="CHEBI:30616"/>
    </ligand>
</feature>
<name>KGUA_DEIRA</name>
<proteinExistence type="inferred from homology"/>
<keyword id="KW-0067">ATP-binding</keyword>
<keyword id="KW-0963">Cytoplasm</keyword>
<keyword id="KW-0418">Kinase</keyword>
<keyword id="KW-0547">Nucleotide-binding</keyword>
<keyword id="KW-1185">Reference proteome</keyword>
<keyword id="KW-0808">Transferase</keyword>
<comment type="function">
    <text evidence="1">Essential for recycling GMP and indirectly, cGMP.</text>
</comment>
<comment type="catalytic activity">
    <reaction>
        <text>GMP + ATP = GDP + ADP</text>
        <dbReference type="Rhea" id="RHEA:20780"/>
        <dbReference type="ChEBI" id="CHEBI:30616"/>
        <dbReference type="ChEBI" id="CHEBI:58115"/>
        <dbReference type="ChEBI" id="CHEBI:58189"/>
        <dbReference type="ChEBI" id="CHEBI:456216"/>
        <dbReference type="EC" id="2.7.4.8"/>
    </reaction>
</comment>
<comment type="subcellular location">
    <subcellularLocation>
        <location evidence="1">Cytoplasm</location>
    </subcellularLocation>
</comment>
<comment type="similarity">
    <text evidence="2">Belongs to the guanylate kinase family.</text>
</comment>
<comment type="sequence caution" evidence="2">
    <conflict type="erroneous initiation">
        <sequence resource="EMBL-CDS" id="AAF11836"/>
    </conflict>
</comment>
<dbReference type="EC" id="2.7.4.8"/>
<dbReference type="EMBL" id="AE000513">
    <property type="protein sequence ID" value="AAF11836.1"/>
    <property type="status" value="ALT_INIT"/>
    <property type="molecule type" value="Genomic_DNA"/>
</dbReference>
<dbReference type="PIR" id="C75291">
    <property type="entry name" value="C75291"/>
</dbReference>
<dbReference type="RefSeq" id="NP_296010.1">
    <property type="nucleotide sequence ID" value="NC_001263.1"/>
</dbReference>
<dbReference type="RefSeq" id="WP_027480091.1">
    <property type="nucleotide sequence ID" value="NC_001263.1"/>
</dbReference>
<dbReference type="SMR" id="Q9RS38"/>
<dbReference type="FunCoup" id="Q9RS38">
    <property type="interactions" value="418"/>
</dbReference>
<dbReference type="STRING" id="243230.DR_2289"/>
<dbReference type="PaxDb" id="243230-DR_2289"/>
<dbReference type="EnsemblBacteria" id="AAF11836">
    <property type="protein sequence ID" value="AAF11836"/>
    <property type="gene ID" value="DR_2289"/>
</dbReference>
<dbReference type="GeneID" id="69518541"/>
<dbReference type="KEGG" id="dra:DR_2289"/>
<dbReference type="PATRIC" id="fig|243230.17.peg.2518"/>
<dbReference type="eggNOG" id="COG0194">
    <property type="taxonomic scope" value="Bacteria"/>
</dbReference>
<dbReference type="HOGENOM" id="CLU_001715_1_1_0"/>
<dbReference type="InParanoid" id="Q9RS38"/>
<dbReference type="OrthoDB" id="9808150at2"/>
<dbReference type="Proteomes" id="UP000002524">
    <property type="component" value="Chromosome 1"/>
</dbReference>
<dbReference type="GO" id="GO:0005829">
    <property type="term" value="C:cytosol"/>
    <property type="evidence" value="ECO:0000318"/>
    <property type="project" value="GO_Central"/>
</dbReference>
<dbReference type="GO" id="GO:0005524">
    <property type="term" value="F:ATP binding"/>
    <property type="evidence" value="ECO:0007669"/>
    <property type="project" value="UniProtKB-UniRule"/>
</dbReference>
<dbReference type="GO" id="GO:0004385">
    <property type="term" value="F:guanylate kinase activity"/>
    <property type="evidence" value="ECO:0000318"/>
    <property type="project" value="GO_Central"/>
</dbReference>
<dbReference type="CDD" id="cd00071">
    <property type="entry name" value="GMPK"/>
    <property type="match status" value="1"/>
</dbReference>
<dbReference type="FunFam" id="3.40.50.300:FF:000855">
    <property type="entry name" value="Guanylate kinase"/>
    <property type="match status" value="1"/>
</dbReference>
<dbReference type="FunFam" id="3.30.63.10:FF:000002">
    <property type="entry name" value="Guanylate kinase 1"/>
    <property type="match status" value="1"/>
</dbReference>
<dbReference type="Gene3D" id="3.30.63.10">
    <property type="entry name" value="Guanylate Kinase phosphate binding domain"/>
    <property type="match status" value="1"/>
</dbReference>
<dbReference type="Gene3D" id="3.40.50.300">
    <property type="entry name" value="P-loop containing nucleotide triphosphate hydrolases"/>
    <property type="match status" value="1"/>
</dbReference>
<dbReference type="HAMAP" id="MF_00328">
    <property type="entry name" value="Guanylate_kinase"/>
    <property type="match status" value="1"/>
</dbReference>
<dbReference type="InterPro" id="IPR008145">
    <property type="entry name" value="GK/Ca_channel_bsu"/>
</dbReference>
<dbReference type="InterPro" id="IPR008144">
    <property type="entry name" value="Guanylate_kin-like_dom"/>
</dbReference>
<dbReference type="InterPro" id="IPR017665">
    <property type="entry name" value="Guanylate_kinase"/>
</dbReference>
<dbReference type="InterPro" id="IPR020590">
    <property type="entry name" value="Guanylate_kinase_CS"/>
</dbReference>
<dbReference type="InterPro" id="IPR027417">
    <property type="entry name" value="P-loop_NTPase"/>
</dbReference>
<dbReference type="NCBIfam" id="TIGR03263">
    <property type="entry name" value="guanyl_kin"/>
    <property type="match status" value="1"/>
</dbReference>
<dbReference type="PANTHER" id="PTHR23117:SF13">
    <property type="entry name" value="GUANYLATE KINASE"/>
    <property type="match status" value="1"/>
</dbReference>
<dbReference type="PANTHER" id="PTHR23117">
    <property type="entry name" value="GUANYLATE KINASE-RELATED"/>
    <property type="match status" value="1"/>
</dbReference>
<dbReference type="Pfam" id="PF00625">
    <property type="entry name" value="Guanylate_kin"/>
    <property type="match status" value="1"/>
</dbReference>
<dbReference type="SMART" id="SM00072">
    <property type="entry name" value="GuKc"/>
    <property type="match status" value="1"/>
</dbReference>
<dbReference type="SUPFAM" id="SSF52540">
    <property type="entry name" value="P-loop containing nucleoside triphosphate hydrolases"/>
    <property type="match status" value="1"/>
</dbReference>
<dbReference type="PROSITE" id="PS00856">
    <property type="entry name" value="GUANYLATE_KINASE_1"/>
    <property type="match status" value="1"/>
</dbReference>
<dbReference type="PROSITE" id="PS50052">
    <property type="entry name" value="GUANYLATE_KINASE_2"/>
    <property type="match status" value="1"/>
</dbReference>
<evidence type="ECO:0000250" key="1"/>
<evidence type="ECO:0000305" key="2"/>